<evidence type="ECO:0000250" key="1">
    <source>
        <dbReference type="UniProtKB" id="O70145"/>
    </source>
</evidence>
<evidence type="ECO:0000250" key="2">
    <source>
        <dbReference type="UniProtKB" id="P14598"/>
    </source>
</evidence>
<evidence type="ECO:0000255" key="3">
    <source>
        <dbReference type="PROSITE-ProRule" id="PRU00192"/>
    </source>
</evidence>
<evidence type="ECO:0000255" key="4">
    <source>
        <dbReference type="PROSITE-ProRule" id="PRU01081"/>
    </source>
</evidence>
<evidence type="ECO:0000256" key="5">
    <source>
        <dbReference type="SAM" id="MobiDB-lite"/>
    </source>
</evidence>
<evidence type="ECO:0000269" key="6">
    <source>
    </source>
</evidence>
<evidence type="ECO:0000269" key="7">
    <source>
    </source>
</evidence>
<evidence type="ECO:0000269" key="8">
    <source>
    </source>
</evidence>
<evidence type="ECO:0000269" key="9">
    <source>
    </source>
</evidence>
<evidence type="ECO:0000269" key="10">
    <source>
    </source>
</evidence>
<evidence type="ECO:0000269" key="11">
    <source>
    </source>
</evidence>
<evidence type="ECO:0000269" key="12">
    <source>
    </source>
</evidence>
<evidence type="ECO:0000269" key="13">
    <source>
    </source>
</evidence>
<evidence type="ECO:0000269" key="14">
    <source>
    </source>
</evidence>
<evidence type="ECO:0000269" key="15">
    <source>
    </source>
</evidence>
<evidence type="ECO:0000269" key="16">
    <source>
    </source>
</evidence>
<evidence type="ECO:0000269" key="17">
    <source>
    </source>
</evidence>
<evidence type="ECO:0000269" key="18">
    <source>
    </source>
</evidence>
<evidence type="ECO:0000269" key="19">
    <source>
    </source>
</evidence>
<evidence type="ECO:0000269" key="20">
    <source>
    </source>
</evidence>
<evidence type="ECO:0000269" key="21">
    <source>
    </source>
</evidence>
<evidence type="ECO:0000269" key="22">
    <source>
    </source>
</evidence>
<evidence type="ECO:0000269" key="23">
    <source>
    </source>
</evidence>
<evidence type="ECO:0000269" key="24">
    <source>
    </source>
</evidence>
<evidence type="ECO:0000269" key="25">
    <source>
    </source>
</evidence>
<evidence type="ECO:0000269" key="26">
    <source>
    </source>
</evidence>
<evidence type="ECO:0000269" key="27">
    <source>
    </source>
</evidence>
<evidence type="ECO:0000269" key="28">
    <source>
    </source>
</evidence>
<evidence type="ECO:0000269" key="29">
    <source ref="4"/>
</evidence>
<evidence type="ECO:0000269" key="30">
    <source ref="8"/>
</evidence>
<evidence type="ECO:0000303" key="31">
    <source>
    </source>
</evidence>
<evidence type="ECO:0000303" key="32">
    <source>
    </source>
</evidence>
<evidence type="ECO:0000305" key="33"/>
<evidence type="ECO:0000305" key="34">
    <source>
    </source>
</evidence>
<evidence type="ECO:0000312" key="35">
    <source>
        <dbReference type="HGNC" id="HGNC:7661"/>
    </source>
</evidence>
<evidence type="ECO:0007744" key="36">
    <source>
        <dbReference type="PDB" id="8WEJ"/>
    </source>
</evidence>
<evidence type="ECO:0007829" key="37">
    <source>
        <dbReference type="PDB" id="1HH8"/>
    </source>
</evidence>
<evidence type="ECO:0007829" key="38">
    <source>
        <dbReference type="PDB" id="1K4U"/>
    </source>
</evidence>
<evidence type="ECO:0007829" key="39">
    <source>
        <dbReference type="PDB" id="1OEY"/>
    </source>
</evidence>
<evidence type="ECO:0007829" key="40">
    <source>
        <dbReference type="PDB" id="2DMO"/>
    </source>
</evidence>
<evidence type="ECO:0007829" key="41">
    <source>
        <dbReference type="PDB" id="8WEJ"/>
    </source>
</evidence>
<dbReference type="EMBL" id="M32011">
    <property type="protein sequence ID" value="AAA36379.1"/>
    <property type="molecule type" value="mRNA"/>
</dbReference>
<dbReference type="EMBL" id="U00788">
    <property type="protein sequence ID" value="AAB60320.1"/>
    <property type="molecule type" value="Genomic_DNA"/>
</dbReference>
<dbReference type="EMBL" id="U00776">
    <property type="protein sequence ID" value="AAB60320.1"/>
    <property type="status" value="JOINED"/>
    <property type="molecule type" value="Genomic_DNA"/>
</dbReference>
<dbReference type="EMBL" id="U00777">
    <property type="protein sequence ID" value="AAB60320.1"/>
    <property type="status" value="JOINED"/>
    <property type="molecule type" value="Genomic_DNA"/>
</dbReference>
<dbReference type="EMBL" id="U00778">
    <property type="protein sequence ID" value="AAB60320.1"/>
    <property type="status" value="JOINED"/>
    <property type="molecule type" value="Genomic_DNA"/>
</dbReference>
<dbReference type="EMBL" id="U00779">
    <property type="protein sequence ID" value="AAB60320.1"/>
    <property type="status" value="JOINED"/>
    <property type="molecule type" value="Genomic_DNA"/>
</dbReference>
<dbReference type="EMBL" id="U00780">
    <property type="protein sequence ID" value="AAB60320.1"/>
    <property type="status" value="JOINED"/>
    <property type="molecule type" value="Genomic_DNA"/>
</dbReference>
<dbReference type="EMBL" id="U00781">
    <property type="protein sequence ID" value="AAB60320.1"/>
    <property type="status" value="JOINED"/>
    <property type="molecule type" value="Genomic_DNA"/>
</dbReference>
<dbReference type="EMBL" id="U00782">
    <property type="protein sequence ID" value="AAB60320.1"/>
    <property type="status" value="JOINED"/>
    <property type="molecule type" value="Genomic_DNA"/>
</dbReference>
<dbReference type="EMBL" id="U00783">
    <property type="protein sequence ID" value="AAB60320.1"/>
    <property type="status" value="JOINED"/>
    <property type="molecule type" value="Genomic_DNA"/>
</dbReference>
<dbReference type="EMBL" id="U00784">
    <property type="protein sequence ID" value="AAB60320.1"/>
    <property type="status" value="JOINED"/>
    <property type="molecule type" value="Genomic_DNA"/>
</dbReference>
<dbReference type="EMBL" id="U00785">
    <property type="protein sequence ID" value="AAB60320.1"/>
    <property type="status" value="JOINED"/>
    <property type="molecule type" value="Genomic_DNA"/>
</dbReference>
<dbReference type="EMBL" id="U00786">
    <property type="protein sequence ID" value="AAB60320.1"/>
    <property type="status" value="JOINED"/>
    <property type="molecule type" value="Genomic_DNA"/>
</dbReference>
<dbReference type="EMBL" id="U00787">
    <property type="protein sequence ID" value="AAB60320.1"/>
    <property type="status" value="JOINED"/>
    <property type="molecule type" value="Genomic_DNA"/>
</dbReference>
<dbReference type="EMBL" id="AF527950">
    <property type="protein sequence ID" value="AAM89263.1"/>
    <property type="molecule type" value="mRNA"/>
</dbReference>
<dbReference type="EMBL" id="BT007439">
    <property type="protein sequence ID" value="AAP36107.1"/>
    <property type="molecule type" value="mRNA"/>
</dbReference>
<dbReference type="EMBL" id="AK296672">
    <property type="protein sequence ID" value="BAG59269.1"/>
    <property type="molecule type" value="mRNA"/>
</dbReference>
<dbReference type="EMBL" id="AK298713">
    <property type="protein sequence ID" value="BAG60869.1"/>
    <property type="molecule type" value="mRNA"/>
</dbReference>
<dbReference type="EMBL" id="AK312666">
    <property type="protein sequence ID" value="BAG35548.1"/>
    <property type="molecule type" value="mRNA"/>
</dbReference>
<dbReference type="EMBL" id="DQ314879">
    <property type="protein sequence ID" value="ABC40738.1"/>
    <property type="molecule type" value="Genomic_DNA"/>
</dbReference>
<dbReference type="EMBL" id="AL137800">
    <property type="status" value="NOT_ANNOTATED_CDS"/>
    <property type="molecule type" value="Genomic_DNA"/>
</dbReference>
<dbReference type="EMBL" id="CH471067">
    <property type="protein sequence ID" value="EAW91160.1"/>
    <property type="molecule type" value="Genomic_DNA"/>
</dbReference>
<dbReference type="EMBL" id="BC001606">
    <property type="protein sequence ID" value="AAH01606.1"/>
    <property type="molecule type" value="mRNA"/>
</dbReference>
<dbReference type="CCDS" id="CCDS1356.1">
    <molecule id="P19878-1"/>
</dbReference>
<dbReference type="CCDS" id="CCDS53446.1">
    <molecule id="P19878-4"/>
</dbReference>
<dbReference type="CCDS" id="CCDS53447.1">
    <molecule id="P19878-3"/>
</dbReference>
<dbReference type="PIR" id="A34855">
    <property type="entry name" value="A34855"/>
</dbReference>
<dbReference type="RefSeq" id="NP_000424.2">
    <molecule id="P19878-1"/>
    <property type="nucleotide sequence ID" value="NM_000433.4"/>
</dbReference>
<dbReference type="RefSeq" id="NP_001121123.1">
    <molecule id="P19878-1"/>
    <property type="nucleotide sequence ID" value="NM_001127651.3"/>
</dbReference>
<dbReference type="RefSeq" id="NP_001177718.1">
    <molecule id="P19878-4"/>
    <property type="nucleotide sequence ID" value="NM_001190789.2"/>
</dbReference>
<dbReference type="RefSeq" id="NP_001177723.1">
    <molecule id="P19878-3"/>
    <property type="nucleotide sequence ID" value="NM_001190794.2"/>
</dbReference>
<dbReference type="RefSeq" id="XP_011507882.1">
    <molecule id="P19878-1"/>
    <property type="nucleotide sequence ID" value="XM_011509580.2"/>
</dbReference>
<dbReference type="RefSeq" id="XP_011507883.1">
    <molecule id="P19878-1"/>
    <property type="nucleotide sequence ID" value="XM_011509581.2"/>
</dbReference>
<dbReference type="RefSeq" id="XP_047277178.1">
    <molecule id="P19878-1"/>
    <property type="nucleotide sequence ID" value="XM_047421222.1"/>
</dbReference>
<dbReference type="RefSeq" id="XP_054192726.1">
    <molecule id="P19878-1"/>
    <property type="nucleotide sequence ID" value="XM_054336751.1"/>
</dbReference>
<dbReference type="RefSeq" id="XP_054192727.1">
    <molecule id="P19878-1"/>
    <property type="nucleotide sequence ID" value="XM_054336752.1"/>
</dbReference>
<dbReference type="RefSeq" id="XP_054192728.1">
    <molecule id="P19878-1"/>
    <property type="nucleotide sequence ID" value="XM_054336753.1"/>
</dbReference>
<dbReference type="PDB" id="1E96">
    <property type="method" value="X-ray"/>
    <property type="resolution" value="2.40 A"/>
    <property type="chains" value="B=1-203"/>
</dbReference>
<dbReference type="PDB" id="1HH8">
    <property type="method" value="X-ray"/>
    <property type="resolution" value="1.80 A"/>
    <property type="chains" value="A=1-213"/>
</dbReference>
<dbReference type="PDB" id="1K4U">
    <property type="method" value="NMR"/>
    <property type="chains" value="S=455-516"/>
</dbReference>
<dbReference type="PDB" id="1OEY">
    <property type="method" value="X-ray"/>
    <property type="resolution" value="2.00 A"/>
    <property type="chains" value="A/B/C/D=352-429"/>
</dbReference>
<dbReference type="PDB" id="1WM5">
    <property type="method" value="X-ray"/>
    <property type="resolution" value="1.95 A"/>
    <property type="chains" value="A=1-203"/>
</dbReference>
<dbReference type="PDB" id="2DMO">
    <property type="method" value="NMR"/>
    <property type="chains" value="A=243-297"/>
</dbReference>
<dbReference type="PDB" id="8WEJ">
    <property type="method" value="EM"/>
    <property type="resolution" value="2.79 A"/>
    <property type="chains" value="D=1-306"/>
</dbReference>
<dbReference type="PDBsum" id="1E96"/>
<dbReference type="PDBsum" id="1HH8"/>
<dbReference type="PDBsum" id="1K4U"/>
<dbReference type="PDBsum" id="1OEY"/>
<dbReference type="PDBsum" id="1WM5"/>
<dbReference type="PDBsum" id="2DMO"/>
<dbReference type="PDBsum" id="8WEJ"/>
<dbReference type="BMRB" id="P19878"/>
<dbReference type="SASBDB" id="P19878"/>
<dbReference type="SMR" id="P19878"/>
<dbReference type="BioGRID" id="110768">
    <property type="interactions" value="32"/>
</dbReference>
<dbReference type="ComplexPortal" id="CPX-1017">
    <property type="entry name" value="Phagocyte NADPH oxidase complex, RAC1 variant"/>
</dbReference>
<dbReference type="ComplexPortal" id="CPX-6134">
    <property type="entry name" value="Phagocyte NADPH oxidase complex, RAC2 variant"/>
</dbReference>
<dbReference type="ComplexPortal" id="CPX-6135">
    <property type="entry name" value="Phagocyte NADPH oxidase complex, RAC3 variant"/>
</dbReference>
<dbReference type="CORUM" id="P19878"/>
<dbReference type="DIP" id="DIP-76N"/>
<dbReference type="FunCoup" id="P19878">
    <property type="interactions" value="329"/>
</dbReference>
<dbReference type="IntAct" id="P19878">
    <property type="interactions" value="23"/>
</dbReference>
<dbReference type="MINT" id="P19878"/>
<dbReference type="STRING" id="9606.ENSP00000356505"/>
<dbReference type="DrugBank" id="DB00514">
    <property type="generic name" value="Dextromethorphan"/>
</dbReference>
<dbReference type="GlyGen" id="P19878">
    <property type="glycosylation" value="1 site, 1 O-linked glycan (1 site)"/>
</dbReference>
<dbReference type="iPTMnet" id="P19878"/>
<dbReference type="PhosphoSitePlus" id="P19878"/>
<dbReference type="BioMuta" id="NCF2"/>
<dbReference type="DMDM" id="1346669"/>
<dbReference type="jPOST" id="P19878"/>
<dbReference type="MassIVE" id="P19878"/>
<dbReference type="PaxDb" id="9606-ENSP00000356505"/>
<dbReference type="PeptideAtlas" id="P19878"/>
<dbReference type="PRIDE" id="P19878"/>
<dbReference type="ProteomicsDB" id="20550"/>
<dbReference type="ProteomicsDB" id="20618"/>
<dbReference type="ProteomicsDB" id="53699">
    <molecule id="P19878-1"/>
</dbReference>
<dbReference type="Antibodypedia" id="702">
    <property type="antibodies" value="282 antibodies from 30 providers"/>
</dbReference>
<dbReference type="DNASU" id="4688"/>
<dbReference type="Ensembl" id="ENST00000367535.8">
    <molecule id="P19878-1"/>
    <property type="protein sequence ID" value="ENSP00000356505.4"/>
    <property type="gene ID" value="ENSG00000116701.16"/>
</dbReference>
<dbReference type="Ensembl" id="ENST00000367536.5">
    <molecule id="P19878-1"/>
    <property type="protein sequence ID" value="ENSP00000356506.1"/>
    <property type="gene ID" value="ENSG00000116701.16"/>
</dbReference>
<dbReference type="Ensembl" id="ENST00000413720.5">
    <molecule id="P19878-3"/>
    <property type="protein sequence ID" value="ENSP00000399294.1"/>
    <property type="gene ID" value="ENSG00000116701.16"/>
</dbReference>
<dbReference type="Ensembl" id="ENST00000418089.5">
    <molecule id="P19878-4"/>
    <property type="protein sequence ID" value="ENSP00000407217.1"/>
    <property type="gene ID" value="ENSG00000116701.16"/>
</dbReference>
<dbReference type="Ensembl" id="ENST00000697330.1">
    <molecule id="P19878-1"/>
    <property type="protein sequence ID" value="ENSP00000513258.1"/>
    <property type="gene ID" value="ENSG00000116701.16"/>
</dbReference>
<dbReference type="GeneID" id="4688"/>
<dbReference type="KEGG" id="hsa:4688"/>
<dbReference type="MANE-Select" id="ENST00000367535.8">
    <property type="protein sequence ID" value="ENSP00000356505.4"/>
    <property type="RefSeq nucleotide sequence ID" value="NM_000433.4"/>
    <property type="RefSeq protein sequence ID" value="NP_000424.2"/>
</dbReference>
<dbReference type="UCSC" id="uc001gqj.5">
    <molecule id="P19878-1"/>
    <property type="organism name" value="human"/>
</dbReference>
<dbReference type="AGR" id="HGNC:7661"/>
<dbReference type="CTD" id="4688"/>
<dbReference type="DisGeNET" id="4688"/>
<dbReference type="GeneCards" id="NCF2"/>
<dbReference type="GeneReviews" id="NCF2"/>
<dbReference type="HGNC" id="HGNC:7661">
    <property type="gene designation" value="NCF2"/>
</dbReference>
<dbReference type="HPA" id="ENSG00000116701">
    <property type="expression patterns" value="Tissue enhanced (bone marrow, lung, lymphoid tissue)"/>
</dbReference>
<dbReference type="MalaCards" id="NCF2"/>
<dbReference type="MIM" id="233710">
    <property type="type" value="phenotype"/>
</dbReference>
<dbReference type="MIM" id="608515">
    <property type="type" value="gene"/>
</dbReference>
<dbReference type="neXtProt" id="NX_P19878"/>
<dbReference type="OpenTargets" id="ENSG00000116701"/>
<dbReference type="Orphanet" id="379">
    <property type="disease" value="Chronic granulomatous disease"/>
</dbReference>
<dbReference type="PharmGKB" id="PA31464"/>
<dbReference type="VEuPathDB" id="HostDB:ENSG00000116701"/>
<dbReference type="eggNOG" id="KOG4225">
    <property type="taxonomic scope" value="Eukaryota"/>
</dbReference>
<dbReference type="GeneTree" id="ENSGT00530000063843"/>
<dbReference type="HOGENOM" id="CLU_041290_0_0_1"/>
<dbReference type="InParanoid" id="P19878"/>
<dbReference type="OMA" id="YATMEDW"/>
<dbReference type="OrthoDB" id="9450131at2759"/>
<dbReference type="PAN-GO" id="P19878">
    <property type="GO annotations" value="3 GO annotations based on evolutionary models"/>
</dbReference>
<dbReference type="PhylomeDB" id="P19878"/>
<dbReference type="TreeFam" id="TF329087"/>
<dbReference type="PathwayCommons" id="P19878"/>
<dbReference type="Reactome" id="R-HSA-1222556">
    <property type="pathway name" value="ROS and RNS production in phagocytes"/>
</dbReference>
<dbReference type="Reactome" id="R-HSA-1236973">
    <property type="pathway name" value="Cross-presentation of particulate exogenous antigens (phagosomes)"/>
</dbReference>
<dbReference type="Reactome" id="R-HSA-3299685">
    <property type="pathway name" value="Detoxification of Reactive Oxygen Species"/>
</dbReference>
<dbReference type="Reactome" id="R-HSA-4420097">
    <property type="pathway name" value="VEGFA-VEGFR2 Pathway"/>
</dbReference>
<dbReference type="Reactome" id="R-HSA-5668599">
    <property type="pathway name" value="RHO GTPases Activate NADPH Oxidases"/>
</dbReference>
<dbReference type="Reactome" id="R-HSA-9013149">
    <property type="pathway name" value="RAC1 GTPase cycle"/>
</dbReference>
<dbReference type="Reactome" id="R-HSA-9013404">
    <property type="pathway name" value="RAC2 GTPase cycle"/>
</dbReference>
<dbReference type="Reactome" id="R-HSA-9013423">
    <property type="pathway name" value="RAC3 GTPase cycle"/>
</dbReference>
<dbReference type="SignaLink" id="P19878"/>
<dbReference type="SIGNOR" id="P19878"/>
<dbReference type="BioGRID-ORCS" id="4688">
    <property type="hits" value="11 hits in 1151 CRISPR screens"/>
</dbReference>
<dbReference type="ChiTaRS" id="NCF2">
    <property type="organism name" value="human"/>
</dbReference>
<dbReference type="EvolutionaryTrace" id="P19878"/>
<dbReference type="GeneWiki" id="Neutrophil_cytosolic_factor_2"/>
<dbReference type="GenomeRNAi" id="4688"/>
<dbReference type="Pharos" id="P19878">
    <property type="development level" value="Tbio"/>
</dbReference>
<dbReference type="PRO" id="PR:P19878"/>
<dbReference type="Proteomes" id="UP000005640">
    <property type="component" value="Chromosome 1"/>
</dbReference>
<dbReference type="RNAct" id="P19878">
    <property type="molecule type" value="protein"/>
</dbReference>
<dbReference type="Bgee" id="ENSG00000116701">
    <property type="expression patterns" value="Expressed in monocyte and 133 other cell types or tissues"/>
</dbReference>
<dbReference type="ExpressionAtlas" id="P19878">
    <property type="expression patterns" value="baseline and differential"/>
</dbReference>
<dbReference type="GO" id="GO:0001669">
    <property type="term" value="C:acrosomal vesicle"/>
    <property type="evidence" value="ECO:0007669"/>
    <property type="project" value="Ensembl"/>
</dbReference>
<dbReference type="GO" id="GO:0005829">
    <property type="term" value="C:cytosol"/>
    <property type="evidence" value="ECO:0000314"/>
    <property type="project" value="HPA"/>
</dbReference>
<dbReference type="GO" id="GO:0016020">
    <property type="term" value="C:membrane"/>
    <property type="evidence" value="ECO:0000314"/>
    <property type="project" value="UniProtKB"/>
</dbReference>
<dbReference type="GO" id="GO:0043020">
    <property type="term" value="C:NADPH oxidase complex"/>
    <property type="evidence" value="ECO:0000314"/>
    <property type="project" value="UniProtKB"/>
</dbReference>
<dbReference type="GO" id="GO:0032010">
    <property type="term" value="C:phagolysosome"/>
    <property type="evidence" value="ECO:0000304"/>
    <property type="project" value="Reactome"/>
</dbReference>
<dbReference type="GO" id="GO:0005886">
    <property type="term" value="C:plasma membrane"/>
    <property type="evidence" value="ECO:0000303"/>
    <property type="project" value="ComplexPortal"/>
</dbReference>
<dbReference type="GO" id="GO:0009055">
    <property type="term" value="F:electron transfer activity"/>
    <property type="evidence" value="ECO:0000304"/>
    <property type="project" value="UniProtKB"/>
</dbReference>
<dbReference type="GO" id="GO:0031267">
    <property type="term" value="F:small GTPase binding"/>
    <property type="evidence" value="ECO:0007669"/>
    <property type="project" value="Ensembl"/>
</dbReference>
<dbReference type="GO" id="GO:0016175">
    <property type="term" value="F:superoxide-generating NAD(P)H oxidase activity"/>
    <property type="evidence" value="ECO:0007669"/>
    <property type="project" value="Ensembl"/>
</dbReference>
<dbReference type="GO" id="GO:0016176">
    <property type="term" value="F:superoxide-generating NADPH oxidase activator activity"/>
    <property type="evidence" value="ECO:0000315"/>
    <property type="project" value="UniProtKB"/>
</dbReference>
<dbReference type="GO" id="GO:0006968">
    <property type="term" value="P:cellular defense response"/>
    <property type="evidence" value="ECO:0000304"/>
    <property type="project" value="ProtInc"/>
</dbReference>
<dbReference type="GO" id="GO:0045087">
    <property type="term" value="P:innate immune response"/>
    <property type="evidence" value="ECO:0000304"/>
    <property type="project" value="BHF-UCL"/>
</dbReference>
<dbReference type="GO" id="GO:0006909">
    <property type="term" value="P:phagocytosis"/>
    <property type="evidence" value="ECO:0007669"/>
    <property type="project" value="InterPro"/>
</dbReference>
<dbReference type="GO" id="GO:0045730">
    <property type="term" value="P:respiratory burst"/>
    <property type="evidence" value="ECO:0000304"/>
    <property type="project" value="BHF-UCL"/>
</dbReference>
<dbReference type="GO" id="GO:0042554">
    <property type="term" value="P:superoxide anion generation"/>
    <property type="evidence" value="ECO:0000314"/>
    <property type="project" value="UniProtKB"/>
</dbReference>
<dbReference type="GO" id="GO:0006801">
    <property type="term" value="P:superoxide metabolic process"/>
    <property type="evidence" value="ECO:0000304"/>
    <property type="project" value="BHF-UCL"/>
</dbReference>
<dbReference type="CDD" id="cd06406">
    <property type="entry name" value="PB1_P67"/>
    <property type="match status" value="1"/>
</dbReference>
<dbReference type="CDD" id="cd12046">
    <property type="entry name" value="SH3_p67phox_C"/>
    <property type="match status" value="1"/>
</dbReference>
<dbReference type="CDD" id="cd11871">
    <property type="entry name" value="SH3_p67phox_N"/>
    <property type="match status" value="1"/>
</dbReference>
<dbReference type="FunFam" id="1.25.40.10:FF:000017">
    <property type="entry name" value="NADPH oxidase regulator NoxR"/>
    <property type="match status" value="1"/>
</dbReference>
<dbReference type="FunFam" id="2.30.30.40:FF:000096">
    <property type="entry name" value="Neutrophil cytosol factor 2"/>
    <property type="match status" value="1"/>
</dbReference>
<dbReference type="FunFam" id="3.10.20.90:FF:000141">
    <property type="entry name" value="Neutrophil cytosol factor 2"/>
    <property type="match status" value="1"/>
</dbReference>
<dbReference type="FunFam" id="2.30.30.40:FF:000260">
    <property type="entry name" value="neutrophil cytosol factor 2 isoform X1"/>
    <property type="match status" value="1"/>
</dbReference>
<dbReference type="Gene3D" id="3.10.20.90">
    <property type="entry name" value="Phosphatidylinositol 3-kinase Catalytic Subunit, Chain A, domain 1"/>
    <property type="match status" value="1"/>
</dbReference>
<dbReference type="Gene3D" id="2.30.30.40">
    <property type="entry name" value="SH3 Domains"/>
    <property type="match status" value="2"/>
</dbReference>
<dbReference type="Gene3D" id="1.25.40.10">
    <property type="entry name" value="Tetratricopeptide repeat domain"/>
    <property type="match status" value="1"/>
</dbReference>
<dbReference type="IDEAL" id="IID00299"/>
<dbReference type="InterPro" id="IPR051864">
    <property type="entry name" value="NCF2_NOXA1"/>
</dbReference>
<dbReference type="InterPro" id="IPR034889">
    <property type="entry name" value="NCF2_SH3"/>
</dbReference>
<dbReference type="InterPro" id="IPR035546">
    <property type="entry name" value="p67phox_SH3_1"/>
</dbReference>
<dbReference type="InterPro" id="IPR053793">
    <property type="entry name" value="PB1-like"/>
</dbReference>
<dbReference type="InterPro" id="IPR000270">
    <property type="entry name" value="PB1_dom"/>
</dbReference>
<dbReference type="InterPro" id="IPR034885">
    <property type="entry name" value="PB1_P67"/>
</dbReference>
<dbReference type="InterPro" id="IPR036028">
    <property type="entry name" value="SH3-like_dom_sf"/>
</dbReference>
<dbReference type="InterPro" id="IPR001452">
    <property type="entry name" value="SH3_domain"/>
</dbReference>
<dbReference type="InterPro" id="IPR011990">
    <property type="entry name" value="TPR-like_helical_dom_sf"/>
</dbReference>
<dbReference type="InterPro" id="IPR019734">
    <property type="entry name" value="TPR_rpt"/>
</dbReference>
<dbReference type="PANTHER" id="PTHR15175:SF3">
    <property type="entry name" value="NEUTROPHIL CYTOSOL FACTOR 2"/>
    <property type="match status" value="1"/>
</dbReference>
<dbReference type="PANTHER" id="PTHR15175">
    <property type="entry name" value="NEUTROPHIL CYTOSOLIC FACTOR 2, NEUTROPHIL NADPH OXIDASE FACTOR 2"/>
    <property type="match status" value="1"/>
</dbReference>
<dbReference type="Pfam" id="PF00564">
    <property type="entry name" value="PB1"/>
    <property type="match status" value="1"/>
</dbReference>
<dbReference type="Pfam" id="PF00018">
    <property type="entry name" value="SH3_1"/>
    <property type="match status" value="2"/>
</dbReference>
<dbReference type="Pfam" id="PF13181">
    <property type="entry name" value="TPR_8"/>
    <property type="match status" value="2"/>
</dbReference>
<dbReference type="PRINTS" id="PR00499">
    <property type="entry name" value="P67PHOX"/>
</dbReference>
<dbReference type="PRINTS" id="PR00452">
    <property type="entry name" value="SH3DOMAIN"/>
</dbReference>
<dbReference type="SMART" id="SM00666">
    <property type="entry name" value="PB1"/>
    <property type="match status" value="1"/>
</dbReference>
<dbReference type="SMART" id="SM00326">
    <property type="entry name" value="SH3"/>
    <property type="match status" value="2"/>
</dbReference>
<dbReference type="SMART" id="SM00028">
    <property type="entry name" value="TPR"/>
    <property type="match status" value="3"/>
</dbReference>
<dbReference type="SUPFAM" id="SSF54277">
    <property type="entry name" value="CAD &amp; PB1 domains"/>
    <property type="match status" value="1"/>
</dbReference>
<dbReference type="SUPFAM" id="SSF50044">
    <property type="entry name" value="SH3-domain"/>
    <property type="match status" value="2"/>
</dbReference>
<dbReference type="SUPFAM" id="SSF48452">
    <property type="entry name" value="TPR-like"/>
    <property type="match status" value="1"/>
</dbReference>
<dbReference type="PROSITE" id="PS51745">
    <property type="entry name" value="PB1"/>
    <property type="match status" value="1"/>
</dbReference>
<dbReference type="PROSITE" id="PS50002">
    <property type="entry name" value="SH3"/>
    <property type="match status" value="2"/>
</dbReference>
<dbReference type="PROSITE" id="PS50005">
    <property type="entry name" value="TPR"/>
    <property type="match status" value="3"/>
</dbReference>
<dbReference type="PROSITE" id="PS50293">
    <property type="entry name" value="TPR_REGION"/>
    <property type="match status" value="1"/>
</dbReference>
<sequence length="526" mass="59762">MSLVEAISLWNEGVLAADKKDWKGALDAFSAVQDPHSRICFNIGCMYTILKNMTEAEKAFTRSINRDKHLAVAYFQRGMLYYQTEKYDLAIKDLKEALIQLRGNQLIDYKILGLQFKLFACEVLYNIAFMYAKKEEWKKAEEQLALATSMKSEPRHSKIDKAMECVWKQKLYEPVVIPVGKLFRPNERQVAQLAKKDYLGKATVVASVVDQDSFSGFAPLQPQAAEPPPRPKTPEIFRALEGEAHRVLFGFVPETKEELQVMPGNIVFVLKKGNDNWATVMFNGQKGLVPCNYLEPVELRIHPQQQPQEESSPQSDIPAPPSSKAPGRPQLSPGQKQKEEPKEVKLSVPMPYTLKVHYKYTVVMKTQPGLPYSQVRDMVSKKLELRLEHTKLSYRPRDSNELVPLSEDSMKDAWGQVKNYCLTLWCENTVGDQGFPDEPKESEKADANNQTTEPQLKKGSQVEALFSYEATQPEDLEFQEGDIILVLSKVNEEWLEGECKGKVGIFPKVFVEDCATTDLESTRREV</sequence>
<feature type="chain" id="PRO_0000106361" description="Neutrophil cytosol factor 2">
    <location>
        <begin position="1"/>
        <end position="526"/>
    </location>
</feature>
<feature type="repeat" description="TPR 1">
    <location>
        <begin position="37"/>
        <end position="70"/>
    </location>
</feature>
<feature type="repeat" description="TPR 2">
    <location>
        <begin position="71"/>
        <end position="104"/>
    </location>
</feature>
<feature type="repeat" description="TPR 3">
    <location>
        <begin position="121"/>
        <end position="154"/>
    </location>
</feature>
<feature type="domain" description="SH3 1" evidence="3">
    <location>
        <begin position="240"/>
        <end position="299"/>
    </location>
</feature>
<feature type="domain" description="PB1" evidence="4">
    <location>
        <begin position="351"/>
        <end position="429"/>
    </location>
</feature>
<feature type="domain" description="SH3 2" evidence="3">
    <location>
        <begin position="457"/>
        <end position="516"/>
    </location>
</feature>
<feature type="region of interest" description="Disordered" evidence="5">
    <location>
        <begin position="303"/>
        <end position="346"/>
    </location>
</feature>
<feature type="region of interest" description="Disordered" evidence="5">
    <location>
        <begin position="433"/>
        <end position="458"/>
    </location>
</feature>
<feature type="compositionally biased region" description="Low complexity" evidence="5">
    <location>
        <begin position="303"/>
        <end position="315"/>
    </location>
</feature>
<feature type="compositionally biased region" description="Basic and acidic residues" evidence="5">
    <location>
        <begin position="336"/>
        <end position="345"/>
    </location>
</feature>
<feature type="compositionally biased region" description="Basic and acidic residues" evidence="5">
    <location>
        <begin position="437"/>
        <end position="446"/>
    </location>
</feature>
<feature type="modified residue" description="Phosphothreonine" evidence="1">
    <location>
        <position position="233"/>
    </location>
</feature>
<feature type="modified residue" description="Phosphoserine" evidence="1">
    <location>
        <position position="399"/>
    </location>
</feature>
<feature type="splice variant" id="VSP_045259" description="In isoform 2 and isoform 4." evidence="31">
    <location>
        <begin position="123"/>
        <end position="203"/>
    </location>
</feature>
<feature type="splice variant" id="VSP_045260" description="In isoform 3." evidence="31">
    <location>
        <begin position="123"/>
        <end position="167"/>
    </location>
</feature>
<feature type="splice variant" id="VSP_045261" description="In isoform 2." evidence="31">
    <location>
        <begin position="502"/>
        <end position="526"/>
    </location>
</feature>
<feature type="sequence variant" id="VAR_017387" description="In CGD2." evidence="6">
    <location>
        <begin position="19"/>
        <end position="21"/>
    </location>
</feature>
<feature type="sequence variant" id="VAR_065002" description="In CGD2; dbSNP:rs137854514." evidence="22">
    <original>N</original>
    <variation>S</variation>
    <location>
        <position position="42"/>
    </location>
</feature>
<feature type="sequence variant" id="VAR_065003" description="In CGD2; dbSNP:rs137854510." evidence="22">
    <original>G</original>
    <variation>C</variation>
    <location>
        <position position="44"/>
    </location>
</feature>
<feature type="sequence variant" id="VAR_065004" description="In CGD2; dbSNP:rs137854510." evidence="9 20">
    <original>G</original>
    <variation>R</variation>
    <location>
        <position position="44"/>
    </location>
</feature>
<feature type="sequence variant" id="VAR_065005" description="In CGD2." evidence="22">
    <location>
        <position position="58"/>
    </location>
</feature>
<feature type="sequence variant" id="VAR_017388" description="In CGD2; dbSNP:rs119103275." evidence="7 22">
    <original>R</original>
    <variation>Q</variation>
    <location>
        <position position="77"/>
    </location>
</feature>
<feature type="sequence variant" id="VAR_008904" description="In CGD2; dbSNP:rs137854519." evidence="27">
    <original>G</original>
    <variation>E</variation>
    <location>
        <position position="78"/>
    </location>
</feature>
<feature type="sequence variant" id="VAR_065006" description="In dbSNP:rs137854512." evidence="6">
    <original>M</original>
    <variation>V</variation>
    <location>
        <position position="79"/>
    </location>
</feature>
<feature type="sequence variant" id="VAR_065007" description="In CGD2; dbSNP:rs137854507." evidence="21 23">
    <original>D</original>
    <variation>E</variation>
    <location>
        <position position="93"/>
    </location>
</feature>
<feature type="sequence variant" id="VAR_065008" description="In CGD2." evidence="22">
    <location>
        <position position="96"/>
    </location>
</feature>
<feature type="sequence variant" id="VAR_065009" description="In CGD2; dbSNP:rs137854515." evidence="22">
    <original>R</original>
    <variation>P</variation>
    <location>
        <position position="102"/>
    </location>
</feature>
<feature type="sequence variant" id="VAR_065010" description="In CGD2; dbSNP:rs137854509." evidence="20">
    <original>D</original>
    <variation>V</variation>
    <location>
        <position position="108"/>
    </location>
</feature>
<feature type="sequence variant" id="VAR_017389" description="In CGD2; dbSNP:rs119103274." evidence="7">
    <original>A</original>
    <variation>V</variation>
    <location>
        <position position="128"/>
    </location>
</feature>
<feature type="sequence variant" id="VAR_065011" description="In CGD2; dbSNP:rs137854516." evidence="22">
    <original>W</original>
    <variation>R</variation>
    <location>
        <position position="137"/>
    </location>
</feature>
<feature type="sequence variant" id="VAR_065012" description="In CGD2; dbSNP:rs137854520." evidence="22">
    <original>A</original>
    <variation>D</variation>
    <location>
        <position position="140"/>
    </location>
</feature>
<feature type="sequence variant" id="VAR_017390" description="In CGD2." evidence="28">
    <original>DK</original>
    <variation>EV</variation>
    <location>
        <begin position="160"/>
        <end position="161"/>
    </location>
</feature>
<feature type="sequence variant" id="VAR_065013" description="In CGD2; dbSNP:rs137854517." evidence="22">
    <original>Q</original>
    <variation>E</variation>
    <location>
        <position position="169"/>
    </location>
</feature>
<feature type="sequence variant" id="VAR_018477" description="In dbSNP:rs2274064." evidence="6 7 12 15 16 29 30">
    <original>K</original>
    <variation>R</variation>
    <location>
        <position position="181"/>
    </location>
</feature>
<feature type="sequence variant" id="VAR_065014" description="In CGD2; dbSNP:rs137854518." evidence="22">
    <original>R</original>
    <variation>P</variation>
    <location>
        <position position="184"/>
    </location>
</feature>
<feature type="sequence variant" id="VAR_065015" description="In CGD2." evidence="22">
    <location>
        <position position="196"/>
    </location>
</feature>
<feature type="sequence variant" id="VAR_065016" description="In CGD2; dbSNP:rs137854508." evidence="21 23">
    <original>A</original>
    <variation>V</variation>
    <location>
        <position position="202"/>
    </location>
</feature>
<feature type="sequence variant" id="VAR_034129" description="In dbSNP:rs13306581.">
    <original>T</original>
    <variation>M</variation>
    <location>
        <position position="279"/>
    </location>
</feature>
<feature type="sequence variant" id="VAR_034130" description="In dbSNP:rs35937854.">
    <original>V</original>
    <variation>A</variation>
    <location>
        <position position="297"/>
    </location>
</feature>
<feature type="sequence variant" id="VAR_018478" description="In dbSNP:rs137854511." evidence="6 12">
    <original>R</original>
    <variation>K</variation>
    <location>
        <position position="328"/>
    </location>
</feature>
<feature type="sequence variant" id="VAR_065017" description="In dbSNP:rs137854513." evidence="7">
    <original>G</original>
    <variation>R</variation>
    <location>
        <position position="369"/>
    </location>
</feature>
<feature type="sequence variant" id="VAR_052620" description="In dbSNP:rs17849502." evidence="6 7 12 29">
    <original>H</original>
    <variation>Q</variation>
    <location>
        <position position="389"/>
    </location>
</feature>
<feature type="sequence variant" id="VAR_008905" description="Impairs interaction with NCF4; dbSNP:rs13306575." evidence="6 14">
    <original>R</original>
    <variation>W</variation>
    <location>
        <position position="395"/>
    </location>
</feature>
<feature type="sequence variant" id="VAR_052621" description="In dbSNP:rs35012521." evidence="18 22 24">
    <original>N</original>
    <variation>I</variation>
    <location>
        <position position="419"/>
    </location>
</feature>
<feature type="helix" evidence="37">
    <location>
        <begin position="3"/>
        <end position="18"/>
    </location>
</feature>
<feature type="helix" evidence="37">
    <location>
        <begin position="22"/>
        <end position="30"/>
    </location>
</feature>
<feature type="strand" evidence="37">
    <location>
        <begin position="32"/>
        <end position="34"/>
    </location>
</feature>
<feature type="helix" evidence="37">
    <location>
        <begin position="37"/>
        <end position="49"/>
    </location>
</feature>
<feature type="helix" evidence="37">
    <location>
        <begin position="53"/>
        <end position="66"/>
    </location>
</feature>
<feature type="helix" evidence="37">
    <location>
        <begin position="71"/>
        <end position="83"/>
    </location>
</feature>
<feature type="helix" evidence="37">
    <location>
        <begin position="87"/>
        <end position="99"/>
    </location>
</feature>
<feature type="turn" evidence="37">
    <location>
        <begin position="100"/>
        <end position="103"/>
    </location>
</feature>
<feature type="strand" evidence="37">
    <location>
        <begin position="105"/>
        <end position="108"/>
    </location>
</feature>
<feature type="helix" evidence="37">
    <location>
        <begin position="110"/>
        <end position="112"/>
    </location>
</feature>
<feature type="strand" evidence="37">
    <location>
        <begin position="117"/>
        <end position="119"/>
    </location>
</feature>
<feature type="helix" evidence="37">
    <location>
        <begin position="120"/>
        <end position="133"/>
    </location>
</feature>
<feature type="helix" evidence="37">
    <location>
        <begin position="137"/>
        <end position="148"/>
    </location>
</feature>
<feature type="helix" evidence="37">
    <location>
        <begin position="154"/>
        <end position="157"/>
    </location>
</feature>
<feature type="helix" evidence="37">
    <location>
        <begin position="158"/>
        <end position="167"/>
    </location>
</feature>
<feature type="helix" evidence="37">
    <location>
        <begin position="187"/>
        <end position="191"/>
    </location>
</feature>
<feature type="strand" evidence="41">
    <location>
        <begin position="203"/>
        <end position="209"/>
    </location>
</feature>
<feature type="strand" evidence="40">
    <location>
        <begin position="243"/>
        <end position="247"/>
    </location>
</feature>
<feature type="strand" evidence="40">
    <location>
        <begin position="255"/>
        <end position="258"/>
    </location>
</feature>
<feature type="strand" evidence="40">
    <location>
        <begin position="266"/>
        <end position="269"/>
    </location>
</feature>
<feature type="strand" evidence="40">
    <location>
        <begin position="274"/>
        <end position="276"/>
    </location>
</feature>
<feature type="strand" evidence="40">
    <location>
        <begin position="278"/>
        <end position="282"/>
    </location>
</feature>
<feature type="strand" evidence="40">
    <location>
        <begin position="285"/>
        <end position="289"/>
    </location>
</feature>
<feature type="strand" evidence="40">
    <location>
        <begin position="294"/>
        <end position="296"/>
    </location>
</feature>
<feature type="strand" evidence="39">
    <location>
        <begin position="352"/>
        <end position="366"/>
    </location>
</feature>
<feature type="helix" evidence="39">
    <location>
        <begin position="372"/>
        <end position="382"/>
    </location>
</feature>
<feature type="helix" evidence="39">
    <location>
        <begin position="387"/>
        <end position="389"/>
    </location>
</feature>
<feature type="strand" evidence="39">
    <location>
        <begin position="392"/>
        <end position="394"/>
    </location>
</feature>
<feature type="turn" evidence="39">
    <location>
        <begin position="407"/>
        <end position="409"/>
    </location>
</feature>
<feature type="helix" evidence="39">
    <location>
        <begin position="410"/>
        <end position="414"/>
    </location>
</feature>
<feature type="strand" evidence="39">
    <location>
        <begin position="421"/>
        <end position="426"/>
    </location>
</feature>
<feature type="strand" evidence="38">
    <location>
        <begin position="460"/>
        <end position="463"/>
    </location>
</feature>
<feature type="strand" evidence="38">
    <location>
        <begin position="472"/>
        <end position="475"/>
    </location>
</feature>
<feature type="strand" evidence="38">
    <location>
        <begin position="483"/>
        <end position="493"/>
    </location>
</feature>
<feature type="strand" evidence="38">
    <location>
        <begin position="495"/>
        <end position="498"/>
    </location>
</feature>
<feature type="strand" evidence="38">
    <location>
        <begin position="503"/>
        <end position="506"/>
    </location>
</feature>
<feature type="helix" evidence="38">
    <location>
        <begin position="508"/>
        <end position="510"/>
    </location>
</feature>
<proteinExistence type="evidence at protein level"/>
<comment type="function">
    <text evidence="2 12 25">Subunit of the phagocyte NADPH oxidase complex that mediates the transfer of electrons from cytosolic NADPH to O2 to produce the superoxide anion (O2(-)) (PubMed:12207919, PubMed:38355798). In the activated complex, electrons are first transferred from NADPH to flavin adenine dinucleotide (FAD) and subsequently transferred via two heme molecules to molecular oxygen, producing superoxide through an outer-sphere reaction (PubMed:38355798). Activation of the NADPH oxidase complex is initiated by the assembly of cytosolic subunits of the NADPH oxidase complex with the core NADPH oxidase complex to form a complex at the plasma membrane or phagosomal membrane (PubMed:38355798). This activation process is initiated by phosphorylation dependent binding of the cytosolic NCF1/p47-phox subunit to the C-terminus of CYBA/p22-phox (By similarity).</text>
</comment>
<comment type="subunit">
    <text evidence="1 8 10 11 13 14 17 19 25 26">Component of the phagocyte NADPH oxidase complex composed of an obligatory core heterodimer formed by the membrane proteins CYBA and CYBB and the cytosolic regulatory subunits NCF1/p47-phox, NCF2/p67-phox, NCF4/p40-phox and the small GTPase RAC1 or RAC2 (PubMed:38355798). Part of a cytosolic complex composed at least by NCF1, NCF2 and NCF4 (PubMed:8280052). Interacts with NCF4 (PubMed:12887891, PubMed:17290225). Interacts (via the C-terminal SH3 domain) with NCF1 (via C-terminus) (PubMed:12169629). Interacts with SYTL1 and RAC1 (PubMed:11090627, PubMed:11278853). May interact with NOXO1 (PubMed:12716910). Interacts with S100A8 and calprotectin (S100A8/9) (PubMed:15642721). Interacts with GBP7 (via GB1/RHD3-type G domain) (By similarity). Interacts with CYBB; the interaction is enhanced in the presence of GBP7 (By similarity).</text>
</comment>
<comment type="interaction">
    <interactant intactId="EBI-489611">
        <id>P19878</id>
    </interactant>
    <interactant intactId="EBI-353997">
        <id>P04899</id>
        <label>GNAI2</label>
    </interactant>
    <organismsDiffer>false</organismsDiffer>
    <experiments>4</experiments>
</comment>
<comment type="interaction">
    <interactant intactId="EBI-489611">
        <id>P19878</id>
    </interactant>
    <interactant intactId="EBI-357130">
        <id>P62873</id>
        <label>GNB1</label>
    </interactant>
    <organismsDiffer>false</organismsDiffer>
    <experiments>2</experiments>
</comment>
<comment type="interaction">
    <interactant intactId="EBI-489611">
        <id>P19878</id>
    </interactant>
    <interactant intactId="EBI-618309">
        <id>Q08379</id>
        <label>GOLGA2</label>
    </interactant>
    <organismsDiffer>false</organismsDiffer>
    <experiments>9</experiments>
</comment>
<comment type="interaction">
    <interactant intactId="EBI-489611">
        <id>P19878</id>
    </interactant>
    <interactant intactId="EBI-954040">
        <id>Q92845</id>
        <label>KIFAP3</label>
    </interactant>
    <organismsDiffer>false</organismsDiffer>
    <experiments>14</experiments>
</comment>
<comment type="interaction">
    <interactant intactId="EBI-489611">
        <id>P19878</id>
    </interactant>
    <interactant intactId="EBI-395044">
        <id>P14598</id>
        <label>NCF1</label>
    </interactant>
    <organismsDiffer>false</organismsDiffer>
    <experiments>14</experiments>
</comment>
<comment type="interaction">
    <interactant intactId="EBI-489611">
        <id>P19878</id>
    </interactant>
    <interactant intactId="EBI-1036870">
        <id>Q15080</id>
        <label>NCF4</label>
    </interactant>
    <organismsDiffer>false</organismsDiffer>
    <experiments>5</experiments>
</comment>
<comment type="interaction">
    <interactant intactId="EBI-489611">
        <id>P19878</id>
    </interactant>
    <interactant intactId="EBI-704279">
        <id>Q05655</id>
        <label>PRKCD</label>
    </interactant>
    <organismsDiffer>false</organismsDiffer>
    <experiments>3</experiments>
</comment>
<comment type="interaction">
    <interactant intactId="EBI-489611">
        <id>P19878</id>
    </interactant>
    <interactant intactId="EBI-1697">
        <id>P27870</id>
        <label>Vav1</label>
    </interactant>
    <organismsDiffer>true</organismsDiffer>
    <experiments>4</experiments>
</comment>
<comment type="subcellular location">
    <subcellularLocation>
        <location evidence="33">Cytoplasm</location>
    </subcellularLocation>
</comment>
<comment type="alternative products">
    <event type="alternative splicing"/>
    <isoform>
        <id>P19878-1</id>
        <name>1</name>
        <sequence type="displayed"/>
    </isoform>
    <isoform>
        <id>P19878-2</id>
        <name>2</name>
        <sequence type="described" ref="VSP_045259 VSP_045261"/>
    </isoform>
    <isoform>
        <id>P19878-3</id>
        <name>3</name>
        <sequence type="described" ref="VSP_045260"/>
    </isoform>
    <isoform>
        <id>P19878-4</id>
        <name>4</name>
        <sequence type="described" ref="VSP_045259"/>
    </isoform>
</comment>
<comment type="domain">
    <text evidence="19">The OPR/PB1 domain mediates the association with NCF4/p40-PHOX.</text>
</comment>
<comment type="disease" evidence="6 7 9 18 20 21 22 23 27 28">
    <disease id="DI-00306">
        <name>Granulomatous disease, chronic, autosomal recessive, 2</name>
        <acronym>CGD2</acronym>
        <description>A form of chronic granulomatous disease, a primary immunodeficiency characterized by severe recurrent bacterial and fungal infections, along with manifestations of chronic granulomatous inflammation. It results from an impaired ability of phagocytes to mount a burst of reactive oxygen species in response to pathogens.</description>
        <dbReference type="MIM" id="233710"/>
    </disease>
    <text>The disease is caused by variants affecting the gene represented in this entry.</text>
</comment>
<comment type="similarity">
    <text evidence="33">Belongs to the NCF2/NOXA1 family.</text>
</comment>
<comment type="online information" name="Mendelian genes neutrophil cytosolic factor 2 (NCF2)">
    <link uri="https://databases.lovd.nl/shared/genes/NCF2"/>
    <text>Leiden Open Variation Database (LOVD)</text>
</comment>
<accession>P19878</accession>
<accession>B2R6Q1</accession>
<accession>B4DKQ7</accession>
<accession>B4DQA7</accession>
<accession>E9PHJ2</accession>
<accession>E9PHX3</accession>
<accession>Q2PP06</accession>
<accession>Q8NFC7</accession>
<accession>Q9BV51</accession>
<name>NCF2_HUMAN</name>
<gene>
    <name evidence="35" type="primary">NCF2</name>
    <name type="synonym">NOXA2</name>
    <name evidence="32" type="synonym">P67PHOX</name>
</gene>
<keyword id="KW-0002">3D-structure</keyword>
<keyword id="KW-0025">Alternative splicing</keyword>
<keyword id="KW-0161">Chronic granulomatous disease</keyword>
<keyword id="KW-0963">Cytoplasm</keyword>
<keyword id="KW-0225">Disease variant</keyword>
<keyword id="KW-0597">Phosphoprotein</keyword>
<keyword id="KW-1267">Proteomics identification</keyword>
<keyword id="KW-1185">Reference proteome</keyword>
<keyword id="KW-0677">Repeat</keyword>
<keyword id="KW-0728">SH3 domain</keyword>
<keyword id="KW-0802">TPR repeat</keyword>
<reference key="1">
    <citation type="journal article" date="1990" name="Science">
        <title>Cloning of a 67-kD neutrophil oxidase factor with similarity to a noncatalytic region of p60c-src.</title>
        <authorList>
            <person name="Leto T.L."/>
            <person name="Lomax K.J."/>
            <person name="Volpp B.D."/>
            <person name="Nunoi H."/>
            <person name="Sechler J.M.G."/>
            <person name="Nauseef W.M."/>
            <person name="Clark R.A."/>
            <person name="Gallin J.I."/>
            <person name="Malech H.L."/>
        </authorList>
    </citation>
    <scope>NUCLEOTIDE SEQUENCE [MRNA] (ISOFORM 1)</scope>
</reference>
<reference key="2">
    <citation type="journal article" date="1993" name="Blood">
        <title>Characterization of the p67phox gene: genomic organization and restriction fragment length polymorphism analysis for prenatal diagnosis in chronic granulomatous disease.</title>
        <authorList>
            <person name="Kenney R.T."/>
            <person name="Malech H.L."/>
            <person name="Epstein N.D."/>
            <person name="Roberts R.L."/>
            <person name="Leto T.L."/>
        </authorList>
    </citation>
    <scope>NUCLEOTIDE SEQUENCE [GENOMIC DNA]</scope>
</reference>
<reference key="3">
    <citation type="journal article" date="2002" name="Biochem. Biophys. Res. Commun.">
        <title>Expression of a p67(phox) homolog in Caco-2 cells giving O(2)(-)-reconstituting ability to cytochrome b(558) together with recombinant p47(phox).</title>
        <authorList>
            <person name="Yoshida L.S."/>
            <person name="Nishida S."/>
            <person name="Shimoyama T."/>
            <person name="Kawahara T."/>
            <person name="Rokutan K."/>
            <person name="Tsunawaki S."/>
        </authorList>
    </citation>
    <scope>NUCLEOTIDE SEQUENCE [MRNA] (ISOFORM 1)</scope>
    <scope>FUNCTION</scope>
    <scope>VARIANTS ARG-181; LYS-328 AND GLN-389</scope>
    <source>
        <tissue>Colon adenocarcinoma</tissue>
    </source>
</reference>
<reference key="4">
    <citation type="submission" date="2003-05" db="EMBL/GenBank/DDBJ databases">
        <title>Cloning of human full-length CDSs in BD Creator(TM) system donor vector.</title>
        <authorList>
            <person name="Kalnine N."/>
            <person name="Chen X."/>
            <person name="Rolfs A."/>
            <person name="Halleck A."/>
            <person name="Hines L."/>
            <person name="Eisenstein S."/>
            <person name="Koundinya M."/>
            <person name="Raphael J."/>
            <person name="Moreira D."/>
            <person name="Kelley T."/>
            <person name="LaBaer J."/>
            <person name="Lin Y."/>
            <person name="Phelan M."/>
            <person name="Farmer A."/>
        </authorList>
    </citation>
    <scope>NUCLEOTIDE SEQUENCE [LARGE SCALE MRNA] (ISOFORM 1)</scope>
    <scope>VARIANTS ARG-181 AND GLN-389</scope>
</reference>
<reference key="5">
    <citation type="journal article" date="2004" name="Nat. Genet.">
        <title>Complete sequencing and characterization of 21,243 full-length human cDNAs.</title>
        <authorList>
            <person name="Ota T."/>
            <person name="Suzuki Y."/>
            <person name="Nishikawa T."/>
            <person name="Otsuki T."/>
            <person name="Sugiyama T."/>
            <person name="Irie R."/>
            <person name="Wakamatsu A."/>
            <person name="Hayashi K."/>
            <person name="Sato H."/>
            <person name="Nagai K."/>
            <person name="Kimura K."/>
            <person name="Makita H."/>
            <person name="Sekine M."/>
            <person name="Obayashi M."/>
            <person name="Nishi T."/>
            <person name="Shibahara T."/>
            <person name="Tanaka T."/>
            <person name="Ishii S."/>
            <person name="Yamamoto J."/>
            <person name="Saito K."/>
            <person name="Kawai Y."/>
            <person name="Isono Y."/>
            <person name="Nakamura Y."/>
            <person name="Nagahari K."/>
            <person name="Murakami K."/>
            <person name="Yasuda T."/>
            <person name="Iwayanagi T."/>
            <person name="Wagatsuma M."/>
            <person name="Shiratori A."/>
            <person name="Sudo H."/>
            <person name="Hosoiri T."/>
            <person name="Kaku Y."/>
            <person name="Kodaira H."/>
            <person name="Kondo H."/>
            <person name="Sugawara M."/>
            <person name="Takahashi M."/>
            <person name="Kanda K."/>
            <person name="Yokoi T."/>
            <person name="Furuya T."/>
            <person name="Kikkawa E."/>
            <person name="Omura Y."/>
            <person name="Abe K."/>
            <person name="Kamihara K."/>
            <person name="Katsuta N."/>
            <person name="Sato K."/>
            <person name="Tanikawa M."/>
            <person name="Yamazaki M."/>
            <person name="Ninomiya K."/>
            <person name="Ishibashi T."/>
            <person name="Yamashita H."/>
            <person name="Murakawa K."/>
            <person name="Fujimori K."/>
            <person name="Tanai H."/>
            <person name="Kimata M."/>
            <person name="Watanabe M."/>
            <person name="Hiraoka S."/>
            <person name="Chiba Y."/>
            <person name="Ishida S."/>
            <person name="Ono Y."/>
            <person name="Takiguchi S."/>
            <person name="Watanabe S."/>
            <person name="Yosida M."/>
            <person name="Hotuta T."/>
            <person name="Kusano J."/>
            <person name="Kanehori K."/>
            <person name="Takahashi-Fujii A."/>
            <person name="Hara H."/>
            <person name="Tanase T.-O."/>
            <person name="Nomura Y."/>
            <person name="Togiya S."/>
            <person name="Komai F."/>
            <person name="Hara R."/>
            <person name="Takeuchi K."/>
            <person name="Arita M."/>
            <person name="Imose N."/>
            <person name="Musashino K."/>
            <person name="Yuuki H."/>
            <person name="Oshima A."/>
            <person name="Sasaki N."/>
            <person name="Aotsuka S."/>
            <person name="Yoshikawa Y."/>
            <person name="Matsunawa H."/>
            <person name="Ichihara T."/>
            <person name="Shiohata N."/>
            <person name="Sano S."/>
            <person name="Moriya S."/>
            <person name="Momiyama H."/>
            <person name="Satoh N."/>
            <person name="Takami S."/>
            <person name="Terashima Y."/>
            <person name="Suzuki O."/>
            <person name="Nakagawa S."/>
            <person name="Senoh A."/>
            <person name="Mizoguchi H."/>
            <person name="Goto Y."/>
            <person name="Shimizu F."/>
            <person name="Wakebe H."/>
            <person name="Hishigaki H."/>
            <person name="Watanabe T."/>
            <person name="Sugiyama A."/>
            <person name="Takemoto M."/>
            <person name="Kawakami B."/>
            <person name="Yamazaki M."/>
            <person name="Watanabe K."/>
            <person name="Kumagai A."/>
            <person name="Itakura S."/>
            <person name="Fukuzumi Y."/>
            <person name="Fujimori Y."/>
            <person name="Komiyama M."/>
            <person name="Tashiro H."/>
            <person name="Tanigami A."/>
            <person name="Fujiwara T."/>
            <person name="Ono T."/>
            <person name="Yamada K."/>
            <person name="Fujii Y."/>
            <person name="Ozaki K."/>
            <person name="Hirao M."/>
            <person name="Ohmori Y."/>
            <person name="Kawabata A."/>
            <person name="Hikiji T."/>
            <person name="Kobatake N."/>
            <person name="Inagaki H."/>
            <person name="Ikema Y."/>
            <person name="Okamoto S."/>
            <person name="Okitani R."/>
            <person name="Kawakami T."/>
            <person name="Noguchi S."/>
            <person name="Itoh T."/>
            <person name="Shigeta K."/>
            <person name="Senba T."/>
            <person name="Matsumura K."/>
            <person name="Nakajima Y."/>
            <person name="Mizuno T."/>
            <person name="Morinaga M."/>
            <person name="Sasaki M."/>
            <person name="Togashi T."/>
            <person name="Oyama M."/>
            <person name="Hata H."/>
            <person name="Watanabe M."/>
            <person name="Komatsu T."/>
            <person name="Mizushima-Sugano J."/>
            <person name="Satoh T."/>
            <person name="Shirai Y."/>
            <person name="Takahashi Y."/>
            <person name="Nakagawa K."/>
            <person name="Okumura K."/>
            <person name="Nagase T."/>
            <person name="Nomura N."/>
            <person name="Kikuchi H."/>
            <person name="Masuho Y."/>
            <person name="Yamashita R."/>
            <person name="Nakai K."/>
            <person name="Yada T."/>
            <person name="Nakamura Y."/>
            <person name="Ohara O."/>
            <person name="Isogai T."/>
            <person name="Sugano S."/>
        </authorList>
    </citation>
    <scope>NUCLEOTIDE SEQUENCE [LARGE SCALE MRNA] (ISOFORMS 1; 2 AND 3)</scope>
    <scope>VARIANT ARG-181</scope>
    <source>
        <tissue>Umbilical cord blood</tissue>
    </source>
</reference>
<reference key="6">
    <citation type="submission" date="2005-12" db="EMBL/GenBank/DDBJ databases">
        <authorList>
            <consortium name="NHLBI resequencing and genotyping service (RS&amp;G)"/>
        </authorList>
    </citation>
    <scope>NUCLEOTIDE SEQUENCE [GENOMIC DNA]</scope>
</reference>
<reference key="7">
    <citation type="journal article" date="2006" name="Nature">
        <title>The DNA sequence and biological annotation of human chromosome 1.</title>
        <authorList>
            <person name="Gregory S.G."/>
            <person name="Barlow K.F."/>
            <person name="McLay K.E."/>
            <person name="Kaul R."/>
            <person name="Swarbreck D."/>
            <person name="Dunham A."/>
            <person name="Scott C.E."/>
            <person name="Howe K.L."/>
            <person name="Woodfine K."/>
            <person name="Spencer C.C.A."/>
            <person name="Jones M.C."/>
            <person name="Gillson C."/>
            <person name="Searle S."/>
            <person name="Zhou Y."/>
            <person name="Kokocinski F."/>
            <person name="McDonald L."/>
            <person name="Evans R."/>
            <person name="Phillips K."/>
            <person name="Atkinson A."/>
            <person name="Cooper R."/>
            <person name="Jones C."/>
            <person name="Hall R.E."/>
            <person name="Andrews T.D."/>
            <person name="Lloyd C."/>
            <person name="Ainscough R."/>
            <person name="Almeida J.P."/>
            <person name="Ambrose K.D."/>
            <person name="Anderson F."/>
            <person name="Andrew R.W."/>
            <person name="Ashwell R.I.S."/>
            <person name="Aubin K."/>
            <person name="Babbage A.K."/>
            <person name="Bagguley C.L."/>
            <person name="Bailey J."/>
            <person name="Beasley H."/>
            <person name="Bethel G."/>
            <person name="Bird C.P."/>
            <person name="Bray-Allen S."/>
            <person name="Brown J.Y."/>
            <person name="Brown A.J."/>
            <person name="Buckley D."/>
            <person name="Burton J."/>
            <person name="Bye J."/>
            <person name="Carder C."/>
            <person name="Chapman J.C."/>
            <person name="Clark S.Y."/>
            <person name="Clarke G."/>
            <person name="Clee C."/>
            <person name="Cobley V."/>
            <person name="Collier R.E."/>
            <person name="Corby N."/>
            <person name="Coville G.J."/>
            <person name="Davies J."/>
            <person name="Deadman R."/>
            <person name="Dunn M."/>
            <person name="Earthrowl M."/>
            <person name="Ellington A.G."/>
            <person name="Errington H."/>
            <person name="Frankish A."/>
            <person name="Frankland J."/>
            <person name="French L."/>
            <person name="Garner P."/>
            <person name="Garnett J."/>
            <person name="Gay L."/>
            <person name="Ghori M.R.J."/>
            <person name="Gibson R."/>
            <person name="Gilby L.M."/>
            <person name="Gillett W."/>
            <person name="Glithero R.J."/>
            <person name="Grafham D.V."/>
            <person name="Griffiths C."/>
            <person name="Griffiths-Jones S."/>
            <person name="Grocock R."/>
            <person name="Hammond S."/>
            <person name="Harrison E.S.I."/>
            <person name="Hart E."/>
            <person name="Haugen E."/>
            <person name="Heath P.D."/>
            <person name="Holmes S."/>
            <person name="Holt K."/>
            <person name="Howden P.J."/>
            <person name="Hunt A.R."/>
            <person name="Hunt S.E."/>
            <person name="Hunter G."/>
            <person name="Isherwood J."/>
            <person name="James R."/>
            <person name="Johnson C."/>
            <person name="Johnson D."/>
            <person name="Joy A."/>
            <person name="Kay M."/>
            <person name="Kershaw J.K."/>
            <person name="Kibukawa M."/>
            <person name="Kimberley A.M."/>
            <person name="King A."/>
            <person name="Knights A.J."/>
            <person name="Lad H."/>
            <person name="Laird G."/>
            <person name="Lawlor S."/>
            <person name="Leongamornlert D.A."/>
            <person name="Lloyd D.M."/>
            <person name="Loveland J."/>
            <person name="Lovell J."/>
            <person name="Lush M.J."/>
            <person name="Lyne R."/>
            <person name="Martin S."/>
            <person name="Mashreghi-Mohammadi M."/>
            <person name="Matthews L."/>
            <person name="Matthews N.S.W."/>
            <person name="McLaren S."/>
            <person name="Milne S."/>
            <person name="Mistry S."/>
            <person name="Moore M.J.F."/>
            <person name="Nickerson T."/>
            <person name="O'Dell C.N."/>
            <person name="Oliver K."/>
            <person name="Palmeiri A."/>
            <person name="Palmer S.A."/>
            <person name="Parker A."/>
            <person name="Patel D."/>
            <person name="Pearce A.V."/>
            <person name="Peck A.I."/>
            <person name="Pelan S."/>
            <person name="Phelps K."/>
            <person name="Phillimore B.J."/>
            <person name="Plumb R."/>
            <person name="Rajan J."/>
            <person name="Raymond C."/>
            <person name="Rouse G."/>
            <person name="Saenphimmachak C."/>
            <person name="Sehra H.K."/>
            <person name="Sheridan E."/>
            <person name="Shownkeen R."/>
            <person name="Sims S."/>
            <person name="Skuce C.D."/>
            <person name="Smith M."/>
            <person name="Steward C."/>
            <person name="Subramanian S."/>
            <person name="Sycamore N."/>
            <person name="Tracey A."/>
            <person name="Tromans A."/>
            <person name="Van Helmond Z."/>
            <person name="Wall M."/>
            <person name="Wallis J.M."/>
            <person name="White S."/>
            <person name="Whitehead S.L."/>
            <person name="Wilkinson J.E."/>
            <person name="Willey D.L."/>
            <person name="Williams H."/>
            <person name="Wilming L."/>
            <person name="Wray P.W."/>
            <person name="Wu Z."/>
            <person name="Coulson A."/>
            <person name="Vaudin M."/>
            <person name="Sulston J.E."/>
            <person name="Durbin R.M."/>
            <person name="Hubbard T."/>
            <person name="Wooster R."/>
            <person name="Dunham I."/>
            <person name="Carter N.P."/>
            <person name="McVean G."/>
            <person name="Ross M.T."/>
            <person name="Harrow J."/>
            <person name="Olson M.V."/>
            <person name="Beck S."/>
            <person name="Rogers J."/>
            <person name="Bentley D.R."/>
        </authorList>
    </citation>
    <scope>NUCLEOTIDE SEQUENCE [LARGE SCALE GENOMIC DNA]</scope>
</reference>
<reference key="8">
    <citation type="submission" date="2005-07" db="EMBL/GenBank/DDBJ databases">
        <authorList>
            <person name="Mural R.J."/>
            <person name="Istrail S."/>
            <person name="Sutton G.G."/>
            <person name="Florea L."/>
            <person name="Halpern A.L."/>
            <person name="Mobarry C.M."/>
            <person name="Lippert R."/>
            <person name="Walenz B."/>
            <person name="Shatkay H."/>
            <person name="Dew I."/>
            <person name="Miller J.R."/>
            <person name="Flanigan M.J."/>
            <person name="Edwards N.J."/>
            <person name="Bolanos R."/>
            <person name="Fasulo D."/>
            <person name="Halldorsson B.V."/>
            <person name="Hannenhalli S."/>
            <person name="Turner R."/>
            <person name="Yooseph S."/>
            <person name="Lu F."/>
            <person name="Nusskern D.R."/>
            <person name="Shue B.C."/>
            <person name="Zheng X.H."/>
            <person name="Zhong F."/>
            <person name="Delcher A.L."/>
            <person name="Huson D.H."/>
            <person name="Kravitz S.A."/>
            <person name="Mouchard L."/>
            <person name="Reinert K."/>
            <person name="Remington K.A."/>
            <person name="Clark A.G."/>
            <person name="Waterman M.S."/>
            <person name="Eichler E.E."/>
            <person name="Adams M.D."/>
            <person name="Hunkapiller M.W."/>
            <person name="Myers E.W."/>
            <person name="Venter J.C."/>
        </authorList>
    </citation>
    <scope>NUCLEOTIDE SEQUENCE [LARGE SCALE GENOMIC DNA]</scope>
    <scope>VARIANT ARG-181</scope>
</reference>
<reference key="9">
    <citation type="journal article" date="2004" name="Genome Res.">
        <title>The status, quality, and expansion of the NIH full-length cDNA project: the Mammalian Gene Collection (MGC).</title>
        <authorList>
            <consortium name="The MGC Project Team"/>
        </authorList>
    </citation>
    <scope>NUCLEOTIDE SEQUENCE [LARGE SCALE MRNA] (ISOFORM 1)</scope>
    <scope>VARIANT ARG-181</scope>
    <source>
        <tissue>Lymphoma</tissue>
    </source>
</reference>
<reference key="10">
    <citation type="journal article" date="1993" name="Biochem. J.">
        <title>p40phox, a third cytosolic component of the activation complex of the NADPH oxidase to contain src homology 3 domains.</title>
        <authorList>
            <person name="Wientjes F.B."/>
            <person name="Hsuan J.J."/>
            <person name="Totty N.F."/>
            <person name="Segal A.W."/>
        </authorList>
    </citation>
    <scope>SUBUNIT</scope>
</reference>
<reference key="11">
    <citation type="journal article" date="2001" name="J. Biol. Chem.">
        <title>JFC1, a novel tandem C2 domain-containing protein associated with the leukocyte NADPH oxidase.</title>
        <authorList>
            <person name="McAdara Berkowitz J.K."/>
            <person name="Catz S.D."/>
            <person name="Johnson J.L."/>
            <person name="Ruedi J.M."/>
            <person name="Thon V."/>
            <person name="Babior B.M."/>
        </authorList>
    </citation>
    <scope>INTERACTION WITH SYTL1</scope>
</reference>
<reference key="12">
    <citation type="journal article" date="2003" name="J. Biol. Chem.">
        <title>Novel human homologues of p47phox and p67phox participate in activation of superoxide-producing NADPH oxidases.</title>
        <authorList>
            <person name="Takeya R."/>
            <person name="Ueno N."/>
            <person name="Kami K."/>
            <person name="Taura M."/>
            <person name="Kohjima M."/>
            <person name="Izaki T."/>
            <person name="Nunoi H."/>
            <person name="Sumimoto H."/>
        </authorList>
    </citation>
    <scope>INTERACTION WITH NOXO1</scope>
</reference>
<reference key="13">
    <citation type="journal article" date="2005" name="FASEB J.">
        <title>The arachidonic acid-binding protein S100A8/A9 promotes NADPH oxidase activation by interaction with p67phox and Rac-2.</title>
        <authorList>
            <person name="Kerkhoff C."/>
            <person name="Nacken W."/>
            <person name="Benedyk M."/>
            <person name="Dagher M.C."/>
            <person name="Sopalla C."/>
            <person name="Doussiere J."/>
        </authorList>
    </citation>
    <scope>INTERACTION WITH S100A8 AND CALPROTECTIN</scope>
</reference>
<reference key="14">
    <citation type="journal article" date="2007" name="EMBO J.">
        <title>Full-length p40phox structure suggests a basis for regulation mechanism of its membrane binding.</title>
        <authorList>
            <person name="Honbou K."/>
            <person name="Minakami R."/>
            <person name="Yuzawa S."/>
            <person name="Takeya R."/>
            <person name="Suzuki N.N."/>
            <person name="Kamakura S."/>
            <person name="Sumimoto H."/>
            <person name="Inagaki F."/>
        </authorList>
    </citation>
    <scope>INTERACTION WITH NCF4</scope>
    <scope>DOMAIN OPR/PB1</scope>
</reference>
<reference key="15">
    <citation type="journal article" date="2000" name="Mol. Cell">
        <title>Structure of the TPR domain of p67phox in complex with Rac.GTP.</title>
        <authorList>
            <person name="Lapouge K."/>
            <person name="Smith S.J."/>
            <person name="Walker P.A."/>
            <person name="Gamblin S.J."/>
            <person name="Smerdon S.J."/>
            <person name="Rittinger K."/>
        </authorList>
    </citation>
    <scope>X-RAY CRYSTALLOGRAPHY (2.4 ANGSTROMS) OF 1-203 IN COMPLEX WITH RAC1</scope>
</reference>
<reference key="16">
    <citation type="journal article" date="2002" name="EMBO J.">
        <title>Diverse recognition of non-PxxP peptide ligands by the SH3 domains from p67(phox), Grb2 and Pex13p.</title>
        <authorList>
            <person name="Kami K."/>
            <person name="Takeya R."/>
            <person name="Sumimoto H."/>
            <person name="Kohda D."/>
        </authorList>
    </citation>
    <scope>STRUCTURE BY NMR OF 455-516 IN COMPLEX WITH NCF1</scope>
    <scope>INTERACTION WITH NCF1</scope>
</reference>
<reference key="17">
    <citation type="journal article" date="2003" name="Mol. Cell">
        <title>PB1 domain-mediated heterodimerization in NADPH oxidase and signaling complexes of atypical protein kinase C with Par6 and p62.</title>
        <authorList>
            <person name="Wilson M.I."/>
            <person name="Gill D.J."/>
            <person name="Perisic O."/>
            <person name="Quinn M.T."/>
            <person name="Williams R.L."/>
        </authorList>
    </citation>
    <scope>X-RAY CRYSTALLOGRAPHY (2.0 ANGSTROMS) OF 352-429 IN COMPLEX WITH NCF4</scope>
    <scope>SUBUNIT</scope>
    <scope>CHARACTERIZATION OF VARIANT TRP-395</scope>
    <scope>INTERACTION WITH NCF4</scope>
</reference>
<reference key="18">
    <citation type="submission" date="2006-05" db="PDB data bank">
        <title>Solution structure of the 1st SH3 domain from human neutrophil cytosol factor 2 (NCF-2).</title>
        <authorList>
            <consortium name="RIKEN structural genomics initiative (RSGI)"/>
        </authorList>
    </citation>
    <scope>STRUCTURE BY NMR OF 242-297</scope>
</reference>
<reference evidence="36" key="19">
    <citation type="journal article" date="2024" name="Nature">
        <title>Structure of human phagocyte NADPH oxidase in the activated state.</title>
        <authorList>
            <person name="Liu X."/>
            <person name="Shi Y."/>
            <person name="Liu R."/>
            <person name="Song K."/>
            <person name="Chen L."/>
        </authorList>
    </citation>
    <scope>STRUCTURE BY ELECTRON MICROSCOPY (2.79 ANGSTROMS) OF 1-306 IN COMPLEX WITH CYBA; CYBB; NFC1 AND RAC1</scope>
    <scope>SUBUNIT</scope>
    <scope>FUNCTION</scope>
    <scope>IDENTIFICATION OF THE NADPH OXIDASE COMPLEX</scope>
</reference>
<reference key="20">
    <citation type="journal article" date="1994" name="Blood">
        <title>Autosomal recessive chronic granulomatous disease with absence of the 67-kD cytosolic NADPH oxidase component: identification of mutation and detection of carriers.</title>
        <authorList>
            <person name="de Boer M."/>
            <person name="Hilarius-Stokman P.M."/>
            <person name="Hossle J.P."/>
            <person name="Verhoeven A.J."/>
            <person name="Graf N."/>
            <person name="Kenney R.T."/>
            <person name="Seger R."/>
            <person name="Roos D."/>
        </authorList>
    </citation>
    <scope>VARIANT CGD2 GLU-78</scope>
</reference>
<reference key="21">
    <citation type="journal article" date="1997" name="Biochem. Biophys. Res. Commun.">
        <title>Identification of a double mutation (D160V-K161E) (sic) in the p67phox gene of a chronic granulomatous disease patient.</title>
        <authorList>
            <person name="Bonizzato A."/>
            <person name="Russo M.P."/>
            <person name="Donini M."/>
            <person name="Dusi S."/>
        </authorList>
    </citation>
    <scope>VARIANT CGD2 160-ASP-LYS-161 DELINS GLU-VAL</scope>
</reference>
<reference key="22">
    <citation type="journal article" date="1999" name="Blood">
        <title>Molecular characterization of autosomal recessive chronic granulomatous disease caused by a defect of the nicotinamide adenine dinucleotide phosphate (reduced form) oxidase component p67-phox.</title>
        <authorList>
            <person name="Patino P.J."/>
            <person name="Rae J."/>
            <person name="Noack D."/>
            <person name="Erickson R."/>
            <person name="Ding J."/>
            <person name="Garcia de Olarte D."/>
            <person name="Curnutte J.T."/>
        </authorList>
    </citation>
    <scope>VARIANT CGD2 19-LYS--ASP-21 DEL</scope>
    <scope>VARIANTS VAL-79; ARG-181; LYS-328; GLN-389 AND TRP-395</scope>
</reference>
<reference key="23">
    <citation type="journal article" date="1999" name="Hum. Genet.">
        <title>Autosomal recessive chronic granulomatous disease caused by novel mutations in NCF-2, the gene encoding the p67-phox component of phagocyte NADPH oxidase.</title>
        <authorList>
            <person name="Noack D."/>
            <person name="Rae J."/>
            <person name="Cross A.R."/>
            <person name="Munoz J."/>
            <person name="Salmen S."/>
            <person name="Mendoza J.A."/>
            <person name="Rossi N."/>
            <person name="Curnutte J.T."/>
            <person name="Heyworth P.G."/>
        </authorList>
    </citation>
    <scope>INVOLVEMENT IN CGD2</scope>
    <scope>VARIANTS CGD2 GLN-77 AND VAL-128</scope>
    <scope>VARIANTS ARG-181; ARG-369 AND GLN-389</scope>
</reference>
<reference key="24">
    <citation type="journal article" date="2000" name="Blood Cells Mol. Dis.">
        <title>Hematologically important mutations: the autosomal recessive forms of chronic granulomatous disease (first update).</title>
        <authorList>
            <person name="Cross A.R."/>
            <person name="Noack D."/>
            <person name="Rae J."/>
            <person name="Curnutte J.T."/>
            <person name="Heyworth P.G."/>
        </authorList>
    </citation>
    <scope>VARIANT CGD2 ARG-44</scope>
</reference>
<reference key="25">
    <citation type="journal article" date="2006" name="J. Hum. Genet.">
        <title>Genetic and mutational heterogeneity of autosomal recessive chronic granulomatous disease in Tunisia.</title>
        <authorList>
            <person name="El Kares R."/>
            <person name="Barbouche M.R."/>
            <person name="Elloumi-Zghal H."/>
            <person name="Bejaoui M."/>
            <person name="Chemli J."/>
            <person name="Mellouli F."/>
            <person name="Tebib N."/>
            <person name="Abdelmoula M.S."/>
            <person name="Boukthir S."/>
            <person name="Fitouri Z."/>
            <person name="M'Rad S."/>
            <person name="Bouslama K."/>
            <person name="Touiri H."/>
            <person name="Abdelhak S."/>
            <person name="Dellagi M.K."/>
        </authorList>
    </citation>
    <scope>VARIANT ILE-419</scope>
</reference>
<reference key="26">
    <citation type="journal article" date="2008" name="Clin. Immunol.">
        <title>Focus on FOCIS: the continuing diagnostic challenge of autosomal recessive chronic granulomatous disease.</title>
        <authorList>
            <person name="Yu G."/>
            <person name="Hong D.K."/>
            <person name="Dionis K.Y."/>
            <person name="Rae J."/>
            <person name="Heyworth P.G."/>
            <person name="Curnutte J.T."/>
            <person name="Lewis D.B."/>
        </authorList>
    </citation>
    <scope>VARIANTS CGD2 ARG-44 AND VAL-108</scope>
</reference>
<reference key="27">
    <citation type="journal article" date="2009" name="Eur. J. Clin. Invest.">
        <title>Four different NCF2 mutations in six families from Turkey and an overview of NCF2 gene mutations.</title>
        <authorList>
            <person name="Koker M.Y."/>
            <person name="Sanal O."/>
            <person name="van Leeuwen K."/>
            <person name="de Boer M."/>
            <person name="Metin A."/>
            <person name="Patiroglu T."/>
            <person name="Ozgur T.T."/>
            <person name="Tezcan I."/>
            <person name="Roos D."/>
        </authorList>
    </citation>
    <scope>VARIANTS CGD2 GLU-93 AND VAL-202</scope>
</reference>
<reference key="28">
    <citation type="journal article" date="2010" name="Blood Cells Mol. Dis.">
        <title>Hematologically important mutations: the autosomal recessive forms of chronic granulomatous disease (second update).</title>
        <authorList>
            <person name="Roos D."/>
            <person name="Kuhns D.B."/>
            <person name="Maddalena A."/>
            <person name="Bustamante J."/>
            <person name="Kannengiesser C."/>
            <person name="de Boer M."/>
            <person name="van Leeuwen K."/>
            <person name="Koker M.Y."/>
            <person name="Wolach B."/>
            <person name="Roesler J."/>
            <person name="Malech H.L."/>
            <person name="Holland S.M."/>
            <person name="Gallin J.I."/>
            <person name="Stasia M.J."/>
        </authorList>
    </citation>
    <scope>VARIANTS CGD2 SER-42; CYS-44; LYS-58 DEL; GLN-77; GLU-96 DEL; PRO-102; ARG-137; ASP-140; GLU-169; PRO-184 AND LYS-196 DEL</scope>
    <scope>VARIANT ILE-419</scope>
</reference>
<reference key="29">
    <citation type="journal article" date="2013" name="J. Allergy Clin. Immunol.">
        <title>Clinical, functional, and genetic characterization of chronic granulomatous disease in 89 Turkish patients.</title>
        <authorList>
            <person name="Koker M.Y."/>
            <person name="Camcioglu Y."/>
            <person name="van Leeuwen K."/>
            <person name="Kilic S.S."/>
            <person name="Barlan I."/>
            <person name="Yilmaz M."/>
            <person name="Metin A."/>
            <person name="de Boer M."/>
            <person name="Avcilar H."/>
            <person name="Patiroglu T."/>
            <person name="Yildiran A."/>
            <person name="Yegin O."/>
            <person name="Tezcan I."/>
            <person name="Sanal O."/>
            <person name="Roos D."/>
        </authorList>
    </citation>
    <scope>VARIANTS CGD2 GLU-93 AND VAL-202</scope>
</reference>
<reference key="30">
    <citation type="journal article" date="2016" name="Nature">
        <title>Analysis of protein-coding genetic variation in 60,706 humans.</title>
        <authorList>
            <consortium name="Exome Aggregation Consortium"/>
            <person name="Lek M."/>
            <person name="Karczewski K.J."/>
            <person name="Minikel E.V."/>
            <person name="Samocha K.E."/>
            <person name="Banks E."/>
            <person name="Fennell T."/>
            <person name="O'Donnell-Luria A.H."/>
            <person name="Ware J.S."/>
            <person name="Hill A.J."/>
            <person name="Cummings B.B."/>
            <person name="Tukiainen T."/>
            <person name="Birnbaum D.P."/>
            <person name="Kosmicki J.A."/>
            <person name="Duncan L.E."/>
            <person name="Estrada K."/>
            <person name="Zhao F."/>
            <person name="Zou J."/>
            <person name="Pierce-Hoffman E."/>
            <person name="Berghout J."/>
            <person name="Cooper D.N."/>
            <person name="Deflaux N."/>
            <person name="DePristo M."/>
            <person name="Do R."/>
            <person name="Flannick J."/>
            <person name="Fromer M."/>
            <person name="Gauthier L."/>
            <person name="Goldstein J."/>
            <person name="Gupta N."/>
            <person name="Howrigan D."/>
            <person name="Kiezun A."/>
            <person name="Kurki M.I."/>
            <person name="Moonshine A.L."/>
            <person name="Natarajan P."/>
            <person name="Orozco L."/>
            <person name="Peloso G.M."/>
            <person name="Poplin R."/>
            <person name="Rivas M.A."/>
            <person name="Ruano-Rubio V."/>
            <person name="Rose S.A."/>
            <person name="Ruderfer D.M."/>
            <person name="Shakir K."/>
            <person name="Stenson P.D."/>
            <person name="Stevens C."/>
            <person name="Thomas B.P."/>
            <person name="Tiao G."/>
            <person name="Tusie-Luna M.T."/>
            <person name="Weisburd B."/>
            <person name="Won H.H."/>
            <person name="Yu D."/>
            <person name="Altshuler D.M."/>
            <person name="Ardissino D."/>
            <person name="Boehnke M."/>
            <person name="Danesh J."/>
            <person name="Donnelly S."/>
            <person name="Elosua R."/>
            <person name="Florez J.C."/>
            <person name="Gabriel S.B."/>
            <person name="Getz G."/>
            <person name="Glatt S.J."/>
            <person name="Hultman C.M."/>
            <person name="Kathiresan S."/>
            <person name="Laakso M."/>
            <person name="McCarroll S."/>
            <person name="McCarthy M.I."/>
            <person name="McGovern D."/>
            <person name="McPherson R."/>
            <person name="Neale B.M."/>
            <person name="Palotie A."/>
            <person name="Purcell S.M."/>
            <person name="Saleheen D."/>
            <person name="Scharf J.M."/>
            <person name="Sklar P."/>
            <person name="Sullivan P.F."/>
            <person name="Tuomilehto J."/>
            <person name="Tsuang M.T."/>
            <person name="Watkins H.C."/>
            <person name="Wilson J.G."/>
            <person name="Daly M.J."/>
            <person name="MacArthur D.G."/>
        </authorList>
    </citation>
    <scope>VARIANT ILE-419</scope>
</reference>
<protein>
    <recommendedName>
        <fullName evidence="33">Neutrophil cytosol factor 2</fullName>
        <shortName>NCF-2</shortName>
    </recommendedName>
    <alternativeName>
        <fullName evidence="34">67 kDa neutrophil oxidase factor</fullName>
    </alternativeName>
    <alternativeName>
        <fullName>NADPH oxidase activator 2</fullName>
    </alternativeName>
    <alternativeName>
        <fullName>Neutrophil NADPH oxidase factor 2</fullName>
    </alternativeName>
    <alternativeName>
        <fullName>p67-phox</fullName>
    </alternativeName>
</protein>
<organism>
    <name type="scientific">Homo sapiens</name>
    <name type="common">Human</name>
    <dbReference type="NCBI Taxonomy" id="9606"/>
    <lineage>
        <taxon>Eukaryota</taxon>
        <taxon>Metazoa</taxon>
        <taxon>Chordata</taxon>
        <taxon>Craniata</taxon>
        <taxon>Vertebrata</taxon>
        <taxon>Euteleostomi</taxon>
        <taxon>Mammalia</taxon>
        <taxon>Eutheria</taxon>
        <taxon>Euarchontoglires</taxon>
        <taxon>Primates</taxon>
        <taxon>Haplorrhini</taxon>
        <taxon>Catarrhini</taxon>
        <taxon>Hominidae</taxon>
        <taxon>Homo</taxon>
    </lineage>
</organism>